<accession>O13713</accession>
<comment type="function">
    <text evidence="1 4">RNA-binding protein involved in RNA processing (PubMed:24081329). Acts as a regulator of mRNA stability: binds to mRNAs and pre-mRNAs, preventing their degradation (PubMed:24081329). Involved in the biogenesis of circular RNAs (circRNAs) which are produced by back-splicing circularization of pre-mRNAs (By similarity).</text>
</comment>
<comment type="subcellular location">
    <subcellularLocation>
        <location evidence="3 4">Nucleus</location>
    </subcellularLocation>
</comment>
<comment type="similarity">
    <text evidence="6">Belongs to the ZC3H14 family.</text>
</comment>
<gene>
    <name evidence="5" type="primary">nab2</name>
    <name type="ORF">SPAC14C4.06c</name>
</gene>
<name>NAB2_SCHPO</name>
<sequence length="307" mass="33929">MTTLLETPGYSEKLHDSIEKKLSEYGWGEEAASLADFVLVMLSNGKTQTEINEELVDLIGSDFDTSFSLWLFNQIEELEKSKNASVESVSKIDEIDFIEKESTDKSQQSFSVPETSIQPQSSQTPNITSLREEKELPTGRVGQKLKLTSQKQRFNPMAASFNYSKSVMPAAKRALTQTQEVPLCKYADKCSRANCIFAHPTPAAAPGEGMVLSSEMCASGKECKAADCVKGHPSPATVTTLPPFMSMSTIPIPCKYKPCLNPACRFIHPTKSRNMTWRPPSKTEETSLSERSFAVNESEEQLHVPSV</sequence>
<dbReference type="EMBL" id="CU329670">
    <property type="protein sequence ID" value="CAB11199.1"/>
    <property type="molecule type" value="Genomic_DNA"/>
</dbReference>
<dbReference type="PIR" id="T37691">
    <property type="entry name" value="T37691"/>
</dbReference>
<dbReference type="RefSeq" id="NP_594911.1">
    <property type="nucleotide sequence ID" value="NM_001020343.2"/>
</dbReference>
<dbReference type="SMR" id="O13713"/>
<dbReference type="BioGRID" id="277968">
    <property type="interactions" value="59"/>
</dbReference>
<dbReference type="STRING" id="284812.O13713"/>
<dbReference type="iPTMnet" id="O13713"/>
<dbReference type="SwissPalm" id="O13713"/>
<dbReference type="PaxDb" id="4896-SPAC14C4.06c.1"/>
<dbReference type="EnsemblFungi" id="SPAC14C4.06c.1">
    <property type="protein sequence ID" value="SPAC14C4.06c.1:pep"/>
    <property type="gene ID" value="SPAC14C4.06c"/>
</dbReference>
<dbReference type="GeneID" id="2541466"/>
<dbReference type="KEGG" id="spo:2541466"/>
<dbReference type="PomBase" id="SPAC14C4.06c">
    <property type="gene designation" value="nab2"/>
</dbReference>
<dbReference type="VEuPathDB" id="FungiDB:SPAC14C4.06c"/>
<dbReference type="eggNOG" id="KOG3702">
    <property type="taxonomic scope" value="Eukaryota"/>
</dbReference>
<dbReference type="HOGENOM" id="CLU_081064_0_0_1"/>
<dbReference type="InParanoid" id="O13713"/>
<dbReference type="OMA" id="DEEIPLC"/>
<dbReference type="PhylomeDB" id="O13713"/>
<dbReference type="PRO" id="PR:O13713"/>
<dbReference type="Proteomes" id="UP000002485">
    <property type="component" value="Chromosome I"/>
</dbReference>
<dbReference type="GO" id="GO:0005737">
    <property type="term" value="C:cytoplasm"/>
    <property type="evidence" value="ECO:0000266"/>
    <property type="project" value="PomBase"/>
</dbReference>
<dbReference type="GO" id="GO:0005635">
    <property type="term" value="C:nuclear envelope"/>
    <property type="evidence" value="ECO:0007005"/>
    <property type="project" value="PomBase"/>
</dbReference>
<dbReference type="GO" id="GO:0005634">
    <property type="term" value="C:nucleus"/>
    <property type="evidence" value="ECO:0000314"/>
    <property type="project" value="PomBase"/>
</dbReference>
<dbReference type="GO" id="GO:0008143">
    <property type="term" value="F:poly(A) binding"/>
    <property type="evidence" value="ECO:0000314"/>
    <property type="project" value="PomBase"/>
</dbReference>
<dbReference type="GO" id="GO:0036002">
    <property type="term" value="F:pre-mRNA binding"/>
    <property type="evidence" value="ECO:0000353"/>
    <property type="project" value="PomBase"/>
</dbReference>
<dbReference type="GO" id="GO:0008270">
    <property type="term" value="F:zinc ion binding"/>
    <property type="evidence" value="ECO:0007669"/>
    <property type="project" value="UniProtKB-KW"/>
</dbReference>
<dbReference type="GO" id="GO:0071028">
    <property type="term" value="P:nuclear mRNA surveillance"/>
    <property type="evidence" value="ECO:0000316"/>
    <property type="project" value="PomBase"/>
</dbReference>
<dbReference type="GO" id="GO:0043488">
    <property type="term" value="P:regulation of mRNA stability"/>
    <property type="evidence" value="ECO:0007669"/>
    <property type="project" value="InterPro"/>
</dbReference>
<dbReference type="Gene3D" id="4.10.1000.40">
    <property type="match status" value="1"/>
</dbReference>
<dbReference type="Gene3D" id="1.10.340.40">
    <property type="entry name" value="Nuclear abundant poly(A) RNA-bind protein 2, N-terminal domain"/>
    <property type="match status" value="1"/>
</dbReference>
<dbReference type="InterPro" id="IPR040366">
    <property type="entry name" value="Nab2/ZC3H14"/>
</dbReference>
<dbReference type="InterPro" id="IPR043094">
    <property type="entry name" value="Nab2/ZC3H14_N_sf"/>
</dbReference>
<dbReference type="InterPro" id="IPR049017">
    <property type="entry name" value="Nab2_Znf4"/>
</dbReference>
<dbReference type="PANTHER" id="PTHR14738">
    <property type="entry name" value="ZINC FINGER CCCH DOMAIN-CONTAINING PROTEIN 14"/>
    <property type="match status" value="1"/>
</dbReference>
<dbReference type="PANTHER" id="PTHR14738:SF29">
    <property type="entry name" value="ZINC FINGER CCCH DOMAIN-CONTAINING PROTEIN 14"/>
    <property type="match status" value="1"/>
</dbReference>
<dbReference type="Pfam" id="PF21803">
    <property type="entry name" value="Nab2-zf4"/>
    <property type="match status" value="1"/>
</dbReference>
<feature type="chain" id="PRO_0000352808" description="Nuclear polyadenylated RNA-binding protein nab2">
    <location>
        <begin position="1"/>
        <end position="307"/>
    </location>
</feature>
<feature type="zinc finger region" description="C3H1-type 1">
    <location>
        <begin position="178"/>
        <end position="202"/>
    </location>
</feature>
<feature type="zinc finger region" description="C3H1-type 2">
    <location>
        <begin position="217"/>
        <end position="232"/>
    </location>
</feature>
<feature type="zinc finger region" description="C3H1-type 3">
    <location>
        <begin position="254"/>
        <end position="268"/>
    </location>
</feature>
<feature type="region of interest" description="Disordered" evidence="2">
    <location>
        <begin position="102"/>
        <end position="135"/>
    </location>
</feature>
<feature type="region of interest" description="Disordered" evidence="2">
    <location>
        <begin position="274"/>
        <end position="307"/>
    </location>
</feature>
<feature type="compositionally biased region" description="Polar residues" evidence="2">
    <location>
        <begin position="105"/>
        <end position="129"/>
    </location>
</feature>
<reference key="1">
    <citation type="journal article" date="2002" name="Nature">
        <title>The genome sequence of Schizosaccharomyces pombe.</title>
        <authorList>
            <person name="Wood V."/>
            <person name="Gwilliam R."/>
            <person name="Rajandream M.A."/>
            <person name="Lyne M.H."/>
            <person name="Lyne R."/>
            <person name="Stewart A."/>
            <person name="Sgouros J.G."/>
            <person name="Peat N."/>
            <person name="Hayles J."/>
            <person name="Baker S.G."/>
            <person name="Basham D."/>
            <person name="Bowman S."/>
            <person name="Brooks K."/>
            <person name="Brown D."/>
            <person name="Brown S."/>
            <person name="Chillingworth T."/>
            <person name="Churcher C.M."/>
            <person name="Collins M."/>
            <person name="Connor R."/>
            <person name="Cronin A."/>
            <person name="Davis P."/>
            <person name="Feltwell T."/>
            <person name="Fraser A."/>
            <person name="Gentles S."/>
            <person name="Goble A."/>
            <person name="Hamlin N."/>
            <person name="Harris D.E."/>
            <person name="Hidalgo J."/>
            <person name="Hodgson G."/>
            <person name="Holroyd S."/>
            <person name="Hornsby T."/>
            <person name="Howarth S."/>
            <person name="Huckle E.J."/>
            <person name="Hunt S."/>
            <person name="Jagels K."/>
            <person name="James K.D."/>
            <person name="Jones L."/>
            <person name="Jones M."/>
            <person name="Leather S."/>
            <person name="McDonald S."/>
            <person name="McLean J."/>
            <person name="Mooney P."/>
            <person name="Moule S."/>
            <person name="Mungall K.L."/>
            <person name="Murphy L.D."/>
            <person name="Niblett D."/>
            <person name="Odell C."/>
            <person name="Oliver K."/>
            <person name="O'Neil S."/>
            <person name="Pearson D."/>
            <person name="Quail M.A."/>
            <person name="Rabbinowitsch E."/>
            <person name="Rutherford K.M."/>
            <person name="Rutter S."/>
            <person name="Saunders D."/>
            <person name="Seeger K."/>
            <person name="Sharp S."/>
            <person name="Skelton J."/>
            <person name="Simmonds M.N."/>
            <person name="Squares R."/>
            <person name="Squares S."/>
            <person name="Stevens K."/>
            <person name="Taylor K."/>
            <person name="Taylor R.G."/>
            <person name="Tivey A."/>
            <person name="Walsh S.V."/>
            <person name="Warren T."/>
            <person name="Whitehead S."/>
            <person name="Woodward J.R."/>
            <person name="Volckaert G."/>
            <person name="Aert R."/>
            <person name="Robben J."/>
            <person name="Grymonprez B."/>
            <person name="Weltjens I."/>
            <person name="Vanstreels E."/>
            <person name="Rieger M."/>
            <person name="Schaefer M."/>
            <person name="Mueller-Auer S."/>
            <person name="Gabel C."/>
            <person name="Fuchs M."/>
            <person name="Duesterhoeft A."/>
            <person name="Fritzc C."/>
            <person name="Holzer E."/>
            <person name="Moestl D."/>
            <person name="Hilbert H."/>
            <person name="Borzym K."/>
            <person name="Langer I."/>
            <person name="Beck A."/>
            <person name="Lehrach H."/>
            <person name="Reinhardt R."/>
            <person name="Pohl T.M."/>
            <person name="Eger P."/>
            <person name="Zimmermann W."/>
            <person name="Wedler H."/>
            <person name="Wambutt R."/>
            <person name="Purnelle B."/>
            <person name="Goffeau A."/>
            <person name="Cadieu E."/>
            <person name="Dreano S."/>
            <person name="Gloux S."/>
            <person name="Lelaure V."/>
            <person name="Mottier S."/>
            <person name="Galibert F."/>
            <person name="Aves S.J."/>
            <person name="Xiang Z."/>
            <person name="Hunt C."/>
            <person name="Moore K."/>
            <person name="Hurst S.M."/>
            <person name="Lucas M."/>
            <person name="Rochet M."/>
            <person name="Gaillardin C."/>
            <person name="Tallada V.A."/>
            <person name="Garzon A."/>
            <person name="Thode G."/>
            <person name="Daga R.R."/>
            <person name="Cruzado L."/>
            <person name="Jimenez J."/>
            <person name="Sanchez M."/>
            <person name="del Rey F."/>
            <person name="Benito J."/>
            <person name="Dominguez A."/>
            <person name="Revuelta J.L."/>
            <person name="Moreno S."/>
            <person name="Armstrong J."/>
            <person name="Forsburg S.L."/>
            <person name="Cerutti L."/>
            <person name="Lowe T."/>
            <person name="McCombie W.R."/>
            <person name="Paulsen I."/>
            <person name="Potashkin J."/>
            <person name="Shpakovski G.V."/>
            <person name="Ussery D."/>
            <person name="Barrell B.G."/>
            <person name="Nurse P."/>
        </authorList>
    </citation>
    <scope>NUCLEOTIDE SEQUENCE [LARGE SCALE GENOMIC DNA]</scope>
    <source>
        <strain>972 / ATCC 24843</strain>
    </source>
</reference>
<reference key="2">
    <citation type="journal article" date="2006" name="Nat. Biotechnol.">
        <title>ORFeome cloning and global analysis of protein localization in the fission yeast Schizosaccharomyces pombe.</title>
        <authorList>
            <person name="Matsuyama A."/>
            <person name="Arai R."/>
            <person name="Yashiroda Y."/>
            <person name="Shirai A."/>
            <person name="Kamata A."/>
            <person name="Sekido S."/>
            <person name="Kobayashi Y."/>
            <person name="Hashimoto A."/>
            <person name="Hamamoto M."/>
            <person name="Hiraoka Y."/>
            <person name="Horinouchi S."/>
            <person name="Yoshida M."/>
        </authorList>
    </citation>
    <scope>SUBCELLULAR LOCATION [LARGE SCALE ANALYSIS]</scope>
</reference>
<reference key="3">
    <citation type="journal article" date="2013" name="Mol. Cell. Biol.">
        <title>Poly(A) tail-mediated gene regulation by opposing roles of Nab2 and Pab2 nuclear poly(A)-binding proteins in pre-mRNA decay.</title>
        <authorList>
            <person name="Grenier St-Sauveur V."/>
            <person name="Soucek S."/>
            <person name="Corbett A.H."/>
            <person name="Bachand F."/>
        </authorList>
    </citation>
    <scope>FUNCTION</scope>
    <scope>SUBCELLULAR LOCATION</scope>
</reference>
<protein>
    <recommendedName>
        <fullName>Nuclear polyadenylated RNA-binding protein nab2</fullName>
    </recommendedName>
</protein>
<evidence type="ECO:0000250" key="1">
    <source>
        <dbReference type="UniProtKB" id="P32505"/>
    </source>
</evidence>
<evidence type="ECO:0000256" key="2">
    <source>
        <dbReference type="SAM" id="MobiDB-lite"/>
    </source>
</evidence>
<evidence type="ECO:0000269" key="3">
    <source>
    </source>
</evidence>
<evidence type="ECO:0000269" key="4">
    <source>
    </source>
</evidence>
<evidence type="ECO:0000303" key="5">
    <source>
    </source>
</evidence>
<evidence type="ECO:0000305" key="6"/>
<keyword id="KW-0479">Metal-binding</keyword>
<keyword id="KW-0539">Nucleus</keyword>
<keyword id="KW-1185">Reference proteome</keyword>
<keyword id="KW-0677">Repeat</keyword>
<keyword id="KW-0862">Zinc</keyword>
<keyword id="KW-0863">Zinc-finger</keyword>
<organism>
    <name type="scientific">Schizosaccharomyces pombe (strain 972 / ATCC 24843)</name>
    <name type="common">Fission yeast</name>
    <dbReference type="NCBI Taxonomy" id="284812"/>
    <lineage>
        <taxon>Eukaryota</taxon>
        <taxon>Fungi</taxon>
        <taxon>Dikarya</taxon>
        <taxon>Ascomycota</taxon>
        <taxon>Taphrinomycotina</taxon>
        <taxon>Schizosaccharomycetes</taxon>
        <taxon>Schizosaccharomycetales</taxon>
        <taxon>Schizosaccharomycetaceae</taxon>
        <taxon>Schizosaccharomyces</taxon>
    </lineage>
</organism>
<proteinExistence type="inferred from homology"/>